<name>RS28_PYRFU</name>
<keyword id="KW-0002">3D-structure</keyword>
<keyword id="KW-1185">Reference proteome</keyword>
<keyword id="KW-0687">Ribonucleoprotein</keyword>
<keyword id="KW-0689">Ribosomal protein</keyword>
<organism>
    <name type="scientific">Pyrococcus furiosus (strain ATCC 43587 / DSM 3638 / JCM 8422 / Vc1)</name>
    <dbReference type="NCBI Taxonomy" id="186497"/>
    <lineage>
        <taxon>Archaea</taxon>
        <taxon>Methanobacteriati</taxon>
        <taxon>Methanobacteriota</taxon>
        <taxon>Thermococci</taxon>
        <taxon>Thermococcales</taxon>
        <taxon>Thermococcaceae</taxon>
        <taxon>Pyrococcus</taxon>
    </lineage>
</organism>
<comment type="subunit">
    <text evidence="2">Part of the 30S ribosomal subunit.</text>
</comment>
<comment type="similarity">
    <text evidence="1">Belongs to the eukaryotic ribosomal protein eS28 family.</text>
</comment>
<gene>
    <name evidence="1" type="primary">rps28e</name>
    <name type="ordered locus">PF1368</name>
</gene>
<protein>
    <recommendedName>
        <fullName evidence="1">Small ribosomal subunit protein eS28</fullName>
    </recommendedName>
    <alternativeName>
        <fullName>30S ribosomal protein S28e</fullName>
    </alternativeName>
</protein>
<dbReference type="EMBL" id="AE009950">
    <property type="protein sequence ID" value="AAL81492.1"/>
    <property type="molecule type" value="Genomic_DNA"/>
</dbReference>
<dbReference type="RefSeq" id="WP_011012515.1">
    <property type="nucleotide sequence ID" value="NZ_CP023154.1"/>
</dbReference>
<dbReference type="PDB" id="4V4N">
    <property type="method" value="EM"/>
    <property type="resolution" value="9.00 A"/>
    <property type="chains" value="X=1-71"/>
</dbReference>
<dbReference type="PDB" id="4V6U">
    <property type="method" value="EM"/>
    <property type="resolution" value="6.60 A"/>
    <property type="chains" value="AX=1-71"/>
</dbReference>
<dbReference type="PDB" id="5JB3">
    <property type="method" value="EM"/>
    <property type="resolution" value="5.34 A"/>
    <property type="chains" value="X=1-71"/>
</dbReference>
<dbReference type="PDB" id="5JBH">
    <property type="method" value="EM"/>
    <property type="resolution" value="5.34 A"/>
    <property type="chains" value="X=1-71"/>
</dbReference>
<dbReference type="PDBsum" id="4V4N"/>
<dbReference type="PDBsum" id="4V6U"/>
<dbReference type="PDBsum" id="5JB3"/>
<dbReference type="PDBsum" id="5JBH"/>
<dbReference type="EMDB" id="EMD-50611"/>
<dbReference type="EMDB" id="EMD-50612"/>
<dbReference type="EMDB" id="EMD-50613"/>
<dbReference type="EMDB" id="EMD-8149"/>
<dbReference type="SMR" id="Q8U159"/>
<dbReference type="STRING" id="186497.PF1368"/>
<dbReference type="PaxDb" id="186497-PF1368"/>
<dbReference type="KEGG" id="pfu:PF1368"/>
<dbReference type="PATRIC" id="fig|186497.12.peg.1431"/>
<dbReference type="eggNOG" id="arCOG04314">
    <property type="taxonomic scope" value="Archaea"/>
</dbReference>
<dbReference type="HOGENOM" id="CLU_178987_2_1_2"/>
<dbReference type="OrthoDB" id="7620at2157"/>
<dbReference type="PhylomeDB" id="Q8U159"/>
<dbReference type="Proteomes" id="UP000001013">
    <property type="component" value="Chromosome"/>
</dbReference>
<dbReference type="GO" id="GO:0022627">
    <property type="term" value="C:cytosolic small ribosomal subunit"/>
    <property type="evidence" value="ECO:0007669"/>
    <property type="project" value="TreeGrafter"/>
</dbReference>
<dbReference type="GO" id="GO:0003735">
    <property type="term" value="F:structural constituent of ribosome"/>
    <property type="evidence" value="ECO:0007669"/>
    <property type="project" value="InterPro"/>
</dbReference>
<dbReference type="GO" id="GO:0030490">
    <property type="term" value="P:maturation of SSU-rRNA"/>
    <property type="evidence" value="ECO:0007669"/>
    <property type="project" value="TreeGrafter"/>
</dbReference>
<dbReference type="GO" id="GO:0000028">
    <property type="term" value="P:ribosomal small subunit assembly"/>
    <property type="evidence" value="ECO:0007669"/>
    <property type="project" value="TreeGrafter"/>
</dbReference>
<dbReference type="GO" id="GO:0006412">
    <property type="term" value="P:translation"/>
    <property type="evidence" value="ECO:0007669"/>
    <property type="project" value="UniProtKB-UniRule"/>
</dbReference>
<dbReference type="CDD" id="cd04457">
    <property type="entry name" value="S1_S28E"/>
    <property type="match status" value="1"/>
</dbReference>
<dbReference type="FunFam" id="2.40.50.140:FF:000145">
    <property type="entry name" value="30S ribosomal protein S28e"/>
    <property type="match status" value="1"/>
</dbReference>
<dbReference type="Gene3D" id="2.40.50.140">
    <property type="entry name" value="Nucleic acid-binding proteins"/>
    <property type="match status" value="1"/>
</dbReference>
<dbReference type="HAMAP" id="MF_00292">
    <property type="entry name" value="Ribosomal_eS28"/>
    <property type="match status" value="1"/>
</dbReference>
<dbReference type="InterPro" id="IPR012340">
    <property type="entry name" value="NA-bd_OB-fold"/>
</dbReference>
<dbReference type="InterPro" id="IPR000289">
    <property type="entry name" value="Ribosomal_eS28"/>
</dbReference>
<dbReference type="InterPro" id="IPR028626">
    <property type="entry name" value="Ribosomal_eS28_CS"/>
</dbReference>
<dbReference type="NCBIfam" id="NF003080">
    <property type="entry name" value="PRK04007.1"/>
    <property type="match status" value="1"/>
</dbReference>
<dbReference type="PANTHER" id="PTHR10769">
    <property type="entry name" value="40S RIBOSOMAL PROTEIN S28"/>
    <property type="match status" value="1"/>
</dbReference>
<dbReference type="PANTHER" id="PTHR10769:SF3">
    <property type="entry name" value="SMALL RIBOSOMAL SUBUNIT PROTEIN ES28"/>
    <property type="match status" value="1"/>
</dbReference>
<dbReference type="Pfam" id="PF01200">
    <property type="entry name" value="Ribosomal_S28e"/>
    <property type="match status" value="1"/>
</dbReference>
<dbReference type="SUPFAM" id="SSF50249">
    <property type="entry name" value="Nucleic acid-binding proteins"/>
    <property type="match status" value="1"/>
</dbReference>
<dbReference type="PROSITE" id="PS00961">
    <property type="entry name" value="RIBOSOMAL_S28E"/>
    <property type="match status" value="1"/>
</dbReference>
<proteinExistence type="evidence at protein level"/>
<reference key="1">
    <citation type="journal article" date="1999" name="Genetics">
        <title>Divergence of the hyperthermophilic archaea Pyrococcus furiosus and P. horikoshii inferred from complete genomic sequences.</title>
        <authorList>
            <person name="Maeder D.L."/>
            <person name="Weiss R.B."/>
            <person name="Dunn D.M."/>
            <person name="Cherry J.L."/>
            <person name="Gonzalez J.M."/>
            <person name="DiRuggiero J."/>
            <person name="Robb F.T."/>
        </authorList>
    </citation>
    <scope>NUCLEOTIDE SEQUENCE [LARGE SCALE GENOMIC DNA]</scope>
    <source>
        <strain>ATCC 43587 / DSM 3638 / JCM 8422 / Vc1</strain>
    </source>
</reference>
<reference evidence="3" key="2">
    <citation type="journal article" date="2013" name="Nucleic Acids Res.">
        <title>Promiscuous behaviour of archaeal ribosomal proteins: implications for eukaryotic ribosome evolution.</title>
        <authorList>
            <person name="Armache J.P."/>
            <person name="Anger A.M."/>
            <person name="Marquez V."/>
            <person name="Franckenberg S."/>
            <person name="Frohlich T."/>
            <person name="Villa E."/>
            <person name="Berninghausen O."/>
            <person name="Thomm M."/>
            <person name="Arnold G.J."/>
            <person name="Beckmann R."/>
            <person name="Wilson D.N."/>
        </authorList>
    </citation>
    <scope>STRUCTURE BY ELECTRON MICROSCOPY (6.60 ANGSTROMS) IN THE 70S RIBOSOME</scope>
    <scope>SUBUNIT</scope>
</reference>
<accession>Q8U159</accession>
<sequence length="71" mass="8100">MAEDEGYPAEVIEIIGRTGTTGDVTQVKVRILEGRDKGRVIRRNVRGPVRIGDILILRETEREAREIKSRR</sequence>
<evidence type="ECO:0000255" key="1">
    <source>
        <dbReference type="HAMAP-Rule" id="MF_00292"/>
    </source>
</evidence>
<evidence type="ECO:0000269" key="2">
    <source>
    </source>
</evidence>
<evidence type="ECO:0007744" key="3">
    <source>
        <dbReference type="PDB" id="4V6U"/>
    </source>
</evidence>
<feature type="chain" id="PRO_0000136857" description="Small ribosomal subunit protein eS28">
    <location>
        <begin position="1"/>
        <end position="71"/>
    </location>
</feature>